<proteinExistence type="inferred from homology"/>
<keyword id="KW-0028">Amino-acid biosynthesis</keyword>
<keyword id="KW-0057">Aromatic amino acid biosynthesis</keyword>
<keyword id="KW-0456">Lyase</keyword>
<keyword id="KW-1185">Reference proteome</keyword>
<keyword id="KW-0822">Tryptophan biosynthesis</keyword>
<accession>B0K8T7</accession>
<evidence type="ECO:0000255" key="1">
    <source>
        <dbReference type="HAMAP-Rule" id="MF_00131"/>
    </source>
</evidence>
<sequence>MNRIDKKFEVLKGEGRKALITFITAGDPDIETTYDIVLAIEEVGADIIELGIPYSDPLADGPTIQASSQRALNKGVKIPDIMRIVEKIRFKSDIPLVYLVYYNSIFKYGIQKFLKESKDVGIDGLIIPDLPLEERKDILEEADKYGIYLIPLVAPTSKERIKLITENGKGFVYCVSITGVTGAREDIETDIEEYMKTVSQYTNMPKAIGFGISTPEMAKKLKDFSDGIIVGSALVERIAKGYNKSEMLQEVKSFVSILKEVL</sequence>
<feature type="chain" id="PRO_1000095757" description="Tryptophan synthase alpha chain">
    <location>
        <begin position="1"/>
        <end position="262"/>
    </location>
</feature>
<feature type="active site" description="Proton acceptor" evidence="1">
    <location>
        <position position="49"/>
    </location>
</feature>
<feature type="active site" description="Proton acceptor" evidence="1">
    <location>
        <position position="60"/>
    </location>
</feature>
<name>TRPA_THEP3</name>
<dbReference type="EC" id="4.2.1.20" evidence="1"/>
<dbReference type="EMBL" id="CP000924">
    <property type="protein sequence ID" value="ABY94550.1"/>
    <property type="molecule type" value="Genomic_DNA"/>
</dbReference>
<dbReference type="RefSeq" id="WP_012269212.1">
    <property type="nucleotide sequence ID" value="NC_010321.1"/>
</dbReference>
<dbReference type="SMR" id="B0K8T7"/>
<dbReference type="STRING" id="340099.Teth39_0894"/>
<dbReference type="KEGG" id="tpd:Teth39_0894"/>
<dbReference type="eggNOG" id="COG0159">
    <property type="taxonomic scope" value="Bacteria"/>
</dbReference>
<dbReference type="HOGENOM" id="CLU_016734_0_0_9"/>
<dbReference type="UniPathway" id="UPA00035">
    <property type="reaction ID" value="UER00044"/>
</dbReference>
<dbReference type="Proteomes" id="UP000002156">
    <property type="component" value="Chromosome"/>
</dbReference>
<dbReference type="GO" id="GO:0005829">
    <property type="term" value="C:cytosol"/>
    <property type="evidence" value="ECO:0007669"/>
    <property type="project" value="TreeGrafter"/>
</dbReference>
<dbReference type="GO" id="GO:0004834">
    <property type="term" value="F:tryptophan synthase activity"/>
    <property type="evidence" value="ECO:0007669"/>
    <property type="project" value="UniProtKB-UniRule"/>
</dbReference>
<dbReference type="CDD" id="cd04724">
    <property type="entry name" value="Tryptophan_synthase_alpha"/>
    <property type="match status" value="1"/>
</dbReference>
<dbReference type="FunFam" id="3.20.20.70:FF:000037">
    <property type="entry name" value="Tryptophan synthase alpha chain"/>
    <property type="match status" value="1"/>
</dbReference>
<dbReference type="Gene3D" id="3.20.20.70">
    <property type="entry name" value="Aldolase class I"/>
    <property type="match status" value="1"/>
</dbReference>
<dbReference type="HAMAP" id="MF_00131">
    <property type="entry name" value="Trp_synth_alpha"/>
    <property type="match status" value="1"/>
</dbReference>
<dbReference type="InterPro" id="IPR013785">
    <property type="entry name" value="Aldolase_TIM"/>
</dbReference>
<dbReference type="InterPro" id="IPR011060">
    <property type="entry name" value="RibuloseP-bd_barrel"/>
</dbReference>
<dbReference type="InterPro" id="IPR018204">
    <property type="entry name" value="Trp_synthase_alpha_AS"/>
</dbReference>
<dbReference type="InterPro" id="IPR002028">
    <property type="entry name" value="Trp_synthase_suA"/>
</dbReference>
<dbReference type="NCBIfam" id="TIGR00262">
    <property type="entry name" value="trpA"/>
    <property type="match status" value="1"/>
</dbReference>
<dbReference type="PANTHER" id="PTHR43406:SF1">
    <property type="entry name" value="TRYPTOPHAN SYNTHASE ALPHA CHAIN, CHLOROPLASTIC"/>
    <property type="match status" value="1"/>
</dbReference>
<dbReference type="PANTHER" id="PTHR43406">
    <property type="entry name" value="TRYPTOPHAN SYNTHASE, ALPHA CHAIN"/>
    <property type="match status" value="1"/>
</dbReference>
<dbReference type="Pfam" id="PF00290">
    <property type="entry name" value="Trp_syntA"/>
    <property type="match status" value="1"/>
</dbReference>
<dbReference type="SUPFAM" id="SSF51366">
    <property type="entry name" value="Ribulose-phoshate binding barrel"/>
    <property type="match status" value="1"/>
</dbReference>
<dbReference type="PROSITE" id="PS00167">
    <property type="entry name" value="TRP_SYNTHASE_ALPHA"/>
    <property type="match status" value="1"/>
</dbReference>
<gene>
    <name evidence="1" type="primary">trpA</name>
    <name type="ordered locus">Teth39_0894</name>
</gene>
<organism>
    <name type="scientific">Thermoanaerobacter pseudethanolicus (strain ATCC 33223 / 39E)</name>
    <name type="common">Clostridium thermohydrosulfuricum</name>
    <dbReference type="NCBI Taxonomy" id="340099"/>
    <lineage>
        <taxon>Bacteria</taxon>
        <taxon>Bacillati</taxon>
        <taxon>Bacillota</taxon>
        <taxon>Clostridia</taxon>
        <taxon>Thermoanaerobacterales</taxon>
        <taxon>Thermoanaerobacteraceae</taxon>
        <taxon>Thermoanaerobacter</taxon>
    </lineage>
</organism>
<protein>
    <recommendedName>
        <fullName evidence="1">Tryptophan synthase alpha chain</fullName>
        <ecNumber evidence="1">4.2.1.20</ecNumber>
    </recommendedName>
</protein>
<comment type="function">
    <text evidence="1">The alpha subunit is responsible for the aldol cleavage of indoleglycerol phosphate to indole and glyceraldehyde 3-phosphate.</text>
</comment>
<comment type="catalytic activity">
    <reaction evidence="1">
        <text>(1S,2R)-1-C-(indol-3-yl)glycerol 3-phosphate + L-serine = D-glyceraldehyde 3-phosphate + L-tryptophan + H2O</text>
        <dbReference type="Rhea" id="RHEA:10532"/>
        <dbReference type="ChEBI" id="CHEBI:15377"/>
        <dbReference type="ChEBI" id="CHEBI:33384"/>
        <dbReference type="ChEBI" id="CHEBI:57912"/>
        <dbReference type="ChEBI" id="CHEBI:58866"/>
        <dbReference type="ChEBI" id="CHEBI:59776"/>
        <dbReference type="EC" id="4.2.1.20"/>
    </reaction>
</comment>
<comment type="pathway">
    <text evidence="1">Amino-acid biosynthesis; L-tryptophan biosynthesis; L-tryptophan from chorismate: step 5/5.</text>
</comment>
<comment type="subunit">
    <text evidence="1">Tetramer of two alpha and two beta chains.</text>
</comment>
<comment type="similarity">
    <text evidence="1">Belongs to the TrpA family.</text>
</comment>
<reference key="1">
    <citation type="submission" date="2008-01" db="EMBL/GenBank/DDBJ databases">
        <title>Complete sequence of Thermoanaerobacter pseudethanolicus 39E.</title>
        <authorList>
            <person name="Copeland A."/>
            <person name="Lucas S."/>
            <person name="Lapidus A."/>
            <person name="Barry K."/>
            <person name="Glavina del Rio T."/>
            <person name="Dalin E."/>
            <person name="Tice H."/>
            <person name="Pitluck S."/>
            <person name="Bruce D."/>
            <person name="Goodwin L."/>
            <person name="Saunders E."/>
            <person name="Brettin T."/>
            <person name="Detter J.C."/>
            <person name="Han C."/>
            <person name="Schmutz J."/>
            <person name="Larimer F."/>
            <person name="Land M."/>
            <person name="Hauser L."/>
            <person name="Kyrpides N."/>
            <person name="Lykidis A."/>
            <person name="Hemme C."/>
            <person name="Fields M.W."/>
            <person name="He Z."/>
            <person name="Zhou J."/>
            <person name="Richardson P."/>
        </authorList>
    </citation>
    <scope>NUCLEOTIDE SEQUENCE [LARGE SCALE GENOMIC DNA]</scope>
    <source>
        <strain>ATCC 33223 / DSM 2355 / 39E</strain>
    </source>
</reference>